<reference key="1">
    <citation type="submission" date="2011-05" db="EMBL/GenBank/DDBJ databases">
        <title>Structural and expression analysis of booting stage genes in Oryza sativa L.</title>
        <authorList>
            <person name="Yoon U.H."/>
        </authorList>
    </citation>
    <scope>NUCLEOTIDE SEQUENCE [MRNA]</scope>
    <source>
        <strain>cv. Ilpoombyeo</strain>
    </source>
</reference>
<reference key="2">
    <citation type="journal article" date="2003" name="Science">
        <title>In-depth view of structure, activity, and evolution of rice chromosome 10.</title>
        <authorList>
            <person name="Yu Y."/>
            <person name="Rambo T."/>
            <person name="Currie J."/>
            <person name="Saski C."/>
            <person name="Kim H.-R."/>
            <person name="Collura K."/>
            <person name="Thompson S."/>
            <person name="Simmons J."/>
            <person name="Yang T.-J."/>
            <person name="Nah G."/>
            <person name="Patel A.J."/>
            <person name="Thurmond S."/>
            <person name="Henry D."/>
            <person name="Oates R."/>
            <person name="Palmer M."/>
            <person name="Pries G."/>
            <person name="Gibson J."/>
            <person name="Anderson H."/>
            <person name="Paradkar M."/>
            <person name="Crane L."/>
            <person name="Dale J."/>
            <person name="Carver M.B."/>
            <person name="Wood T."/>
            <person name="Frisch D."/>
            <person name="Engler F."/>
            <person name="Soderlund C."/>
            <person name="Palmer L.E."/>
            <person name="Teytelman L."/>
            <person name="Nascimento L."/>
            <person name="De la Bastide M."/>
            <person name="Spiegel L."/>
            <person name="Ware D."/>
            <person name="O'Shaughnessy A."/>
            <person name="Dike S."/>
            <person name="Dedhia N."/>
            <person name="Preston R."/>
            <person name="Huang E."/>
            <person name="Ferraro K."/>
            <person name="Kuit K."/>
            <person name="Miller B."/>
            <person name="Zutavern T."/>
            <person name="Katzenberger F."/>
            <person name="Muller S."/>
            <person name="Balija V."/>
            <person name="Martienssen R.A."/>
            <person name="Stein L."/>
            <person name="Minx P."/>
            <person name="Johnson D."/>
            <person name="Cordum H."/>
            <person name="Mardis E."/>
            <person name="Cheng Z."/>
            <person name="Jiang J."/>
            <person name="Wilson R."/>
            <person name="McCombie W.R."/>
            <person name="Wing R.A."/>
            <person name="Yuan Q."/>
            <person name="Ouyang S."/>
            <person name="Liu J."/>
            <person name="Jones K.M."/>
            <person name="Gansberger K."/>
            <person name="Moffat K."/>
            <person name="Hill J."/>
            <person name="Tsitrin T."/>
            <person name="Overton L."/>
            <person name="Bera J."/>
            <person name="Kim M."/>
            <person name="Jin S."/>
            <person name="Tallon L."/>
            <person name="Ciecko A."/>
            <person name="Pai G."/>
            <person name="Van Aken S."/>
            <person name="Utterback T."/>
            <person name="Reidmuller S."/>
            <person name="Bormann J."/>
            <person name="Feldblyum T."/>
            <person name="Hsiao J."/>
            <person name="Zismann V."/>
            <person name="Blunt S."/>
            <person name="de Vazeille A.R."/>
            <person name="Shaffer T."/>
            <person name="Koo H."/>
            <person name="Suh B."/>
            <person name="Yang Q."/>
            <person name="Haas B."/>
            <person name="Peterson J."/>
            <person name="Pertea M."/>
            <person name="Volfovsky N."/>
            <person name="Wortman J."/>
            <person name="White O."/>
            <person name="Salzberg S.L."/>
            <person name="Fraser C.M."/>
            <person name="Buell C.R."/>
            <person name="Messing J."/>
            <person name="Song R."/>
            <person name="Fuks G."/>
            <person name="Llaca V."/>
            <person name="Kovchak S."/>
            <person name="Young S."/>
            <person name="Bowers J.E."/>
            <person name="Paterson A.H."/>
            <person name="Johns M.A."/>
            <person name="Mao L."/>
            <person name="Pan H."/>
            <person name="Dean R.A."/>
        </authorList>
    </citation>
    <scope>NUCLEOTIDE SEQUENCE [LARGE SCALE GENOMIC DNA]</scope>
    <source>
        <strain>cv. Nipponbare</strain>
    </source>
</reference>
<reference key="3">
    <citation type="journal article" date="2005" name="Nature">
        <title>The map-based sequence of the rice genome.</title>
        <authorList>
            <consortium name="International rice genome sequencing project (IRGSP)"/>
        </authorList>
    </citation>
    <scope>NUCLEOTIDE SEQUENCE [LARGE SCALE GENOMIC DNA]</scope>
    <source>
        <strain>cv. Nipponbare</strain>
    </source>
</reference>
<reference key="4">
    <citation type="journal article" date="2008" name="Nucleic Acids Res.">
        <title>The rice annotation project database (RAP-DB): 2008 update.</title>
        <authorList>
            <consortium name="The rice annotation project (RAP)"/>
        </authorList>
    </citation>
    <scope>GENOME REANNOTATION</scope>
    <source>
        <strain>cv. Nipponbare</strain>
    </source>
</reference>
<reference key="5">
    <citation type="journal article" date="2013" name="Rice">
        <title>Improvement of the Oryza sativa Nipponbare reference genome using next generation sequence and optical map data.</title>
        <authorList>
            <person name="Kawahara Y."/>
            <person name="de la Bastide M."/>
            <person name="Hamilton J.P."/>
            <person name="Kanamori H."/>
            <person name="McCombie W.R."/>
            <person name="Ouyang S."/>
            <person name="Schwartz D.C."/>
            <person name="Tanaka T."/>
            <person name="Wu J."/>
            <person name="Zhou S."/>
            <person name="Childs K.L."/>
            <person name="Davidson R.M."/>
            <person name="Lin H."/>
            <person name="Quesada-Ocampo L."/>
            <person name="Vaillancourt B."/>
            <person name="Sakai H."/>
            <person name="Lee S.S."/>
            <person name="Kim J."/>
            <person name="Numa H."/>
            <person name="Itoh T."/>
            <person name="Buell C.R."/>
            <person name="Matsumoto T."/>
        </authorList>
    </citation>
    <scope>GENOME REANNOTATION</scope>
    <source>
        <strain>cv. Nipponbare</strain>
    </source>
</reference>
<reference key="6">
    <citation type="journal article" date="2003" name="Science">
        <title>Collection, mapping, and annotation of over 28,000 cDNA clones from japonica rice.</title>
        <authorList>
            <consortium name="The rice full-length cDNA consortium"/>
        </authorList>
    </citation>
    <scope>NUCLEOTIDE SEQUENCE [LARGE SCALE MRNA]</scope>
    <source>
        <strain>cv. Nipponbare</strain>
    </source>
</reference>
<reference key="7">
    <citation type="journal article" date="2011" name="Biosci. Biotechnol. Biochem.">
        <title>Characterization of recombinant beta-amylases from Oryza sativa.</title>
        <authorList>
            <person name="Koide T."/>
            <person name="Ohnishi Y."/>
            <person name="Horinouchi S."/>
        </authorList>
    </citation>
    <scope>FUNCTION</scope>
    <scope>CATALYTIC ACTIVITY</scope>
    <scope>BIOPHYSICOCHEMICAL PROPERTIES</scope>
</reference>
<protein>
    <recommendedName>
        <fullName evidence="6">Beta-amylase 1, chloroplastic</fullName>
        <shortName evidence="5">OsBamy1</shortName>
        <ecNumber evidence="4">3.2.1.2</ecNumber>
    </recommendedName>
    <alternativeName>
        <fullName evidence="6">4-alpha-D-glucan maltohydrolase</fullName>
    </alternativeName>
</protein>
<gene>
    <name evidence="5" type="primary">BAMY1</name>
    <name evidence="9" type="ordered locus">Os10g0465700</name>
    <name evidence="8" type="ordered locus">LOC_Os10g32810</name>
    <name evidence="7" type="ORF">OSJNBa0006L06.1</name>
</gene>
<feature type="transit peptide" description="Chloroplast" evidence="2">
    <location>
        <begin position="1"/>
        <end position="36"/>
    </location>
</feature>
<feature type="chain" id="PRO_0000440334" description="Beta-amylase 1, chloroplastic">
    <location>
        <begin position="37"/>
        <end position="535"/>
    </location>
</feature>
<feature type="active site" description="Proton donor" evidence="1 3">
    <location>
        <position position="247"/>
    </location>
</feature>
<feature type="active site" description="Proton acceptor" evidence="1">
    <location>
        <position position="446"/>
    </location>
</feature>
<feature type="binding site" evidence="1">
    <location>
        <position position="115"/>
    </location>
    <ligand>
        <name>substrate</name>
    </ligand>
</feature>
<feature type="binding site" evidence="1">
    <location>
        <position position="155"/>
    </location>
    <ligand>
        <name>substrate</name>
    </ligand>
</feature>
<feature type="binding site" evidence="1">
    <location>
        <position position="163"/>
    </location>
    <ligand>
        <name>substrate</name>
    </ligand>
</feature>
<feature type="binding site" evidence="1">
    <location>
        <position position="361"/>
    </location>
    <ligand>
        <name>substrate</name>
    </ligand>
</feature>
<feature type="binding site" evidence="1">
    <location>
        <position position="366"/>
    </location>
    <ligand>
        <name>substrate</name>
    </ligand>
</feature>
<feature type="binding site" evidence="1">
    <location>
        <position position="408"/>
    </location>
    <ligand>
        <name>substrate</name>
    </ligand>
</feature>
<feature type="binding site" evidence="1">
    <location>
        <begin position="447"/>
        <end position="448"/>
    </location>
    <ligand>
        <name>substrate</name>
    </ligand>
</feature>
<feature type="binding site" evidence="1">
    <location>
        <position position="480"/>
    </location>
    <ligand>
        <name>substrate</name>
    </ligand>
</feature>
<feature type="sequence conflict" description="In Ref. 1; AFI71858." evidence="6" ref="1">
    <original>D</original>
    <variation>A</variation>
    <location>
        <position position="352"/>
    </location>
</feature>
<feature type="sequence conflict" description="In Ref. 1; AFI71858." evidence="6" ref="1">
    <original>Y</original>
    <variation>F</variation>
    <location>
        <position position="478"/>
    </location>
</feature>
<feature type="sequence conflict" description="In Ref. 1; AFI71858." evidence="6" ref="1">
    <original>A</original>
    <variation>V</variation>
    <location>
        <position position="510"/>
    </location>
</feature>
<comment type="function">
    <text evidence="4 6">Possesses beta-amylase activity in vitro (PubMed:21512221). May be involved in cold resistance by mediating the accumulation of maltose upon freezing stress, thus contributing to the protection of membranes (Probable).</text>
</comment>
<comment type="catalytic activity">
    <reaction evidence="4">
        <text>Hydrolysis of (1-&gt;4)-alpha-D-glucosidic linkages in polysaccharides so as to remove successive maltose units from the non-reducing ends of the chains.</text>
        <dbReference type="EC" id="3.2.1.2"/>
    </reaction>
</comment>
<comment type="biophysicochemical properties">
    <phDependence>
        <text evidence="4">Optimum pH is 5.5-6.0.</text>
    </phDependence>
    <temperatureDependence>
        <text evidence="4">Optimum temperature is 35 degrees Celsius.</text>
    </temperatureDependence>
</comment>
<comment type="subcellular location">
    <subcellularLocation>
        <location evidence="2">Plastid</location>
        <location evidence="2">Chloroplast</location>
    </subcellularLocation>
</comment>
<comment type="similarity">
    <text evidence="6">Belongs to the glycosyl hydrolase 14 family.</text>
</comment>
<organism>
    <name type="scientific">Oryza sativa subsp. japonica</name>
    <name type="common">Rice</name>
    <dbReference type="NCBI Taxonomy" id="39947"/>
    <lineage>
        <taxon>Eukaryota</taxon>
        <taxon>Viridiplantae</taxon>
        <taxon>Streptophyta</taxon>
        <taxon>Embryophyta</taxon>
        <taxon>Tracheophyta</taxon>
        <taxon>Spermatophyta</taxon>
        <taxon>Magnoliopsida</taxon>
        <taxon>Liliopsida</taxon>
        <taxon>Poales</taxon>
        <taxon>Poaceae</taxon>
        <taxon>BOP clade</taxon>
        <taxon>Oryzoideae</taxon>
        <taxon>Oryzeae</taxon>
        <taxon>Oryzinae</taxon>
        <taxon>Oryza</taxon>
        <taxon>Oryza sativa</taxon>
    </lineage>
</organism>
<sequence>MALNLAQSAAAAACFATAGDARRAASVVAMPSSSSSATTSLRMKRQAACEPVACRAVARHVAAAAASSRRNGVPVFVMMPLDTVSKCGSALNRRKAVAASLAALKSAGVEGIMVDVWWGIVESEGPGRYNFDGYVELMEMARKTGLKVQAVMSFHQCGGNVGDSVNIPLPRWVVEEMEKDNDLAYTDQWGRRNFEYISLGCDAMPVFKGRTPVECYTDFMRAFRDHFASFLGDTIVEIQVGMGPAGELRYPSYPESNGTWRFPGIGAFQCNDRYMRSSLKAAAEARGKPEWGHGGPTDAGGYNNWPEDTVFFRGDCGGWSTEYGEFFLSWYSQMLLEHGERVLSGATSVFGDGAGAKISVKVAGIHWHYGTRSHAPELTAGYYNTRHRDGYLPIARMLARHGAVLNFTCVEMRDHEQPQEAQCMPEALVRQVAAAARAAGVGLAGENALPRYDGTAHDQVVAAAADRAAEDRMVAFTYLRMGPDLFHPDNWRRFVAFVRRMSESGSPREAAESAAHGVAQATGSLVHEAAVALRS</sequence>
<keyword id="KW-0119">Carbohydrate metabolism</keyword>
<keyword id="KW-0150">Chloroplast</keyword>
<keyword id="KW-0326">Glycosidase</keyword>
<keyword id="KW-0378">Hydrolase</keyword>
<keyword id="KW-0934">Plastid</keyword>
<keyword id="KW-0624">Polysaccharide degradation</keyword>
<keyword id="KW-1185">Reference proteome</keyword>
<keyword id="KW-0809">Transit peptide</keyword>
<evidence type="ECO:0000250" key="1">
    <source>
        <dbReference type="UniProtKB" id="P10538"/>
    </source>
</evidence>
<evidence type="ECO:0000255" key="2"/>
<evidence type="ECO:0000255" key="3">
    <source>
        <dbReference type="PROSITE-ProRule" id="PRU10050"/>
    </source>
</evidence>
<evidence type="ECO:0000269" key="4">
    <source>
    </source>
</evidence>
<evidence type="ECO:0000303" key="5">
    <source>
    </source>
</evidence>
<evidence type="ECO:0000305" key="6"/>
<evidence type="ECO:0000312" key="7">
    <source>
        <dbReference type="EMBL" id="AAK27799.1"/>
    </source>
</evidence>
<evidence type="ECO:0000312" key="8">
    <source>
        <dbReference type="EMBL" id="AAP54185.1"/>
    </source>
</evidence>
<evidence type="ECO:0000312" key="9">
    <source>
        <dbReference type="EMBL" id="BAF26712.1"/>
    </source>
</evidence>
<accession>Q9AV88</accession>
<accession>I3QD77</accession>
<accession>Q7XDM6</accession>
<dbReference type="EC" id="3.2.1.2" evidence="4"/>
<dbReference type="EMBL" id="JF969232">
    <property type="protein sequence ID" value="AFI71858.1"/>
    <property type="molecule type" value="mRNA"/>
</dbReference>
<dbReference type="EMBL" id="AC022457">
    <property type="protein sequence ID" value="AAK27799.1"/>
    <property type="molecule type" value="Genomic_DNA"/>
</dbReference>
<dbReference type="EMBL" id="DP000086">
    <property type="protein sequence ID" value="AAP54185.1"/>
    <property type="molecule type" value="Genomic_DNA"/>
</dbReference>
<dbReference type="EMBL" id="AP008216">
    <property type="protein sequence ID" value="BAF26712.1"/>
    <property type="molecule type" value="Genomic_DNA"/>
</dbReference>
<dbReference type="EMBL" id="AP014966">
    <property type="protein sequence ID" value="BAT11208.1"/>
    <property type="molecule type" value="Genomic_DNA"/>
</dbReference>
<dbReference type="EMBL" id="AK067249">
    <property type="protein sequence ID" value="BAG90332.1"/>
    <property type="molecule type" value="mRNA"/>
</dbReference>
<dbReference type="SMR" id="Q9AV88"/>
<dbReference type="FunCoup" id="Q9AV88">
    <property type="interactions" value="453"/>
</dbReference>
<dbReference type="STRING" id="39947.Q9AV88"/>
<dbReference type="CAZy" id="GH14">
    <property type="family name" value="Glycoside Hydrolase Family 14"/>
</dbReference>
<dbReference type="PaxDb" id="39947-Q9AV88"/>
<dbReference type="EnsemblPlants" id="Os10t0465700-01">
    <property type="protein sequence ID" value="Os10t0465700-01"/>
    <property type="gene ID" value="Os10g0465700"/>
</dbReference>
<dbReference type="Gramene" id="Os10t0465700-01">
    <property type="protein sequence ID" value="Os10t0465700-01"/>
    <property type="gene ID" value="Os10g0465700"/>
</dbReference>
<dbReference type="KEGG" id="dosa:Os10g0465700"/>
<dbReference type="eggNOG" id="ENOG502QTBX">
    <property type="taxonomic scope" value="Eukaryota"/>
</dbReference>
<dbReference type="HOGENOM" id="CLU_016754_5_1_1"/>
<dbReference type="InParanoid" id="Q9AV88"/>
<dbReference type="OMA" id="TPIQCYS"/>
<dbReference type="OrthoDB" id="1660156at2759"/>
<dbReference type="Proteomes" id="UP000000763">
    <property type="component" value="Chromosome 10"/>
</dbReference>
<dbReference type="Proteomes" id="UP000059680">
    <property type="component" value="Chromosome 10"/>
</dbReference>
<dbReference type="GO" id="GO:0009507">
    <property type="term" value="C:chloroplast"/>
    <property type="evidence" value="ECO:0007669"/>
    <property type="project" value="UniProtKB-SubCell"/>
</dbReference>
<dbReference type="GO" id="GO:0016161">
    <property type="term" value="F:beta-amylase activity"/>
    <property type="evidence" value="ECO:0007669"/>
    <property type="project" value="UniProtKB-EC"/>
</dbReference>
<dbReference type="GO" id="GO:0000272">
    <property type="term" value="P:polysaccharide catabolic process"/>
    <property type="evidence" value="ECO:0007669"/>
    <property type="project" value="UniProtKB-KW"/>
</dbReference>
<dbReference type="Gene3D" id="3.20.20.80">
    <property type="entry name" value="Glycosidases"/>
    <property type="match status" value="1"/>
</dbReference>
<dbReference type="InterPro" id="IPR001554">
    <property type="entry name" value="Glyco_hydro_14"/>
</dbReference>
<dbReference type="InterPro" id="IPR018238">
    <property type="entry name" value="Glyco_hydro_14_CS"/>
</dbReference>
<dbReference type="InterPro" id="IPR001371">
    <property type="entry name" value="Glyco_hydro_14B_pln"/>
</dbReference>
<dbReference type="InterPro" id="IPR017853">
    <property type="entry name" value="Glycoside_hydrolase_SF"/>
</dbReference>
<dbReference type="PANTHER" id="PTHR31352">
    <property type="entry name" value="BETA-AMYLASE 1, CHLOROPLASTIC"/>
    <property type="match status" value="1"/>
</dbReference>
<dbReference type="PANTHER" id="PTHR31352:SF31">
    <property type="entry name" value="BETA-AMYLASE 1, CHLOROPLASTIC"/>
    <property type="match status" value="1"/>
</dbReference>
<dbReference type="Pfam" id="PF01373">
    <property type="entry name" value="Glyco_hydro_14"/>
    <property type="match status" value="1"/>
</dbReference>
<dbReference type="PRINTS" id="PR00750">
    <property type="entry name" value="BETAAMYLASE"/>
</dbReference>
<dbReference type="PRINTS" id="PR00842">
    <property type="entry name" value="GLHYDLASE14B"/>
</dbReference>
<dbReference type="SUPFAM" id="SSF51445">
    <property type="entry name" value="(Trans)glycosidases"/>
    <property type="match status" value="1"/>
</dbReference>
<dbReference type="PROSITE" id="PS00506">
    <property type="entry name" value="BETA_AMYLASE_1"/>
    <property type="match status" value="1"/>
</dbReference>
<dbReference type="PROSITE" id="PS00679">
    <property type="entry name" value="BETA_AMYLASE_2"/>
    <property type="match status" value="1"/>
</dbReference>
<name>BAMY1_ORYSJ</name>
<proteinExistence type="evidence at protein level"/>